<accession>Q465R4</accession>
<reference key="1">
    <citation type="journal article" date="2006" name="J. Bacteriol.">
        <title>The Methanosarcina barkeri genome: comparative analysis with Methanosarcina acetivorans and Methanosarcina mazei reveals extensive rearrangement within methanosarcinal genomes.</title>
        <authorList>
            <person name="Maeder D.L."/>
            <person name="Anderson I."/>
            <person name="Brettin T.S."/>
            <person name="Bruce D.C."/>
            <person name="Gilna P."/>
            <person name="Han C.S."/>
            <person name="Lapidus A."/>
            <person name="Metcalf W.W."/>
            <person name="Saunders E."/>
            <person name="Tapia R."/>
            <person name="Sowers K.R."/>
        </authorList>
    </citation>
    <scope>NUCLEOTIDE SEQUENCE [LARGE SCALE GENOMIC DNA]</scope>
    <source>
        <strain>Fusaro / DSM 804</strain>
    </source>
</reference>
<proteinExistence type="inferred from homology"/>
<sequence length="433" mass="46101">MVMMLFKKLSDVSEAEMQKLLSRGSGLEDVAKTVSTVLSDVRTKGDSALREYTAKFDKVELANFGVSEEEFQQALSGISPELLDHLKSAAANIRAFHEAQLPKATWFMELKPGIVLGQKATPLESVGAYAPGGRASYPSTVLMTVIPARVAGVEQVIVCTPPRPDGSVHPLTLAAAKVAGADKVFKLGGVQAIGSMAYGTETVPKVDKIVGPGNVFVTAAKMQIRDVAEIDFPAGPSEVLIIADESADAVMVASDILAQSEHDPNSVSILVTGSDTLAEAVKREVLVQAEQAARSSIIKSSLENAAILIADSLEQCIGFSNKFAPEHLEIMVADPDFVLDRIKNAGSIFIGNYSPVPVGDYASGTNHVLPTSGYARVYSGLNINHFIKYSSIQRISKSGLESLKETVIALAEEEGLQAHADAIRTRFGYKPSK</sequence>
<protein>
    <recommendedName>
        <fullName evidence="1">Histidinol dehydrogenase</fullName>
        <shortName evidence="1">HDH</shortName>
        <ecNumber evidence="1">1.1.1.23</ecNumber>
    </recommendedName>
</protein>
<dbReference type="EC" id="1.1.1.23" evidence="1"/>
<dbReference type="EMBL" id="CP000099">
    <property type="protein sequence ID" value="AAZ72378.1"/>
    <property type="molecule type" value="Genomic_DNA"/>
</dbReference>
<dbReference type="SMR" id="Q465R4"/>
<dbReference type="STRING" id="269797.Mbar_A3507"/>
<dbReference type="PaxDb" id="269797-Mbar_A3507"/>
<dbReference type="KEGG" id="mba:Mbar_A3507"/>
<dbReference type="eggNOG" id="arCOG04352">
    <property type="taxonomic scope" value="Archaea"/>
</dbReference>
<dbReference type="HOGENOM" id="CLU_006732_3_0_2"/>
<dbReference type="OrthoDB" id="36308at2157"/>
<dbReference type="UniPathway" id="UPA00031">
    <property type="reaction ID" value="UER00014"/>
</dbReference>
<dbReference type="GO" id="GO:0005737">
    <property type="term" value="C:cytoplasm"/>
    <property type="evidence" value="ECO:0007669"/>
    <property type="project" value="TreeGrafter"/>
</dbReference>
<dbReference type="GO" id="GO:0004399">
    <property type="term" value="F:histidinol dehydrogenase activity"/>
    <property type="evidence" value="ECO:0007669"/>
    <property type="project" value="UniProtKB-UniRule"/>
</dbReference>
<dbReference type="GO" id="GO:0051287">
    <property type="term" value="F:NAD binding"/>
    <property type="evidence" value="ECO:0007669"/>
    <property type="project" value="InterPro"/>
</dbReference>
<dbReference type="GO" id="GO:0008270">
    <property type="term" value="F:zinc ion binding"/>
    <property type="evidence" value="ECO:0007669"/>
    <property type="project" value="UniProtKB-UniRule"/>
</dbReference>
<dbReference type="GO" id="GO:0000105">
    <property type="term" value="P:L-histidine biosynthetic process"/>
    <property type="evidence" value="ECO:0007669"/>
    <property type="project" value="UniProtKB-UniRule"/>
</dbReference>
<dbReference type="CDD" id="cd06572">
    <property type="entry name" value="Histidinol_dh"/>
    <property type="match status" value="1"/>
</dbReference>
<dbReference type="FunFam" id="3.40.50.1980:FF:000001">
    <property type="entry name" value="Histidinol dehydrogenase"/>
    <property type="match status" value="1"/>
</dbReference>
<dbReference type="FunFam" id="3.40.50.1980:FF:000026">
    <property type="entry name" value="Histidinol dehydrogenase"/>
    <property type="match status" value="1"/>
</dbReference>
<dbReference type="Gene3D" id="1.20.5.1300">
    <property type="match status" value="1"/>
</dbReference>
<dbReference type="Gene3D" id="3.40.50.1980">
    <property type="entry name" value="Nitrogenase molybdenum iron protein domain"/>
    <property type="match status" value="2"/>
</dbReference>
<dbReference type="HAMAP" id="MF_01024">
    <property type="entry name" value="HisD"/>
    <property type="match status" value="1"/>
</dbReference>
<dbReference type="InterPro" id="IPR016161">
    <property type="entry name" value="Ald_DH/histidinol_DH"/>
</dbReference>
<dbReference type="InterPro" id="IPR001692">
    <property type="entry name" value="Histidinol_DH_CS"/>
</dbReference>
<dbReference type="InterPro" id="IPR022695">
    <property type="entry name" value="Histidinol_DH_monofunct"/>
</dbReference>
<dbReference type="InterPro" id="IPR012131">
    <property type="entry name" value="Hstdl_DH"/>
</dbReference>
<dbReference type="NCBIfam" id="TIGR00069">
    <property type="entry name" value="hisD"/>
    <property type="match status" value="1"/>
</dbReference>
<dbReference type="PANTHER" id="PTHR21256:SF2">
    <property type="entry name" value="HISTIDINE BIOSYNTHESIS TRIFUNCTIONAL PROTEIN"/>
    <property type="match status" value="1"/>
</dbReference>
<dbReference type="PANTHER" id="PTHR21256">
    <property type="entry name" value="HISTIDINOL DEHYDROGENASE HDH"/>
    <property type="match status" value="1"/>
</dbReference>
<dbReference type="Pfam" id="PF00815">
    <property type="entry name" value="Histidinol_dh"/>
    <property type="match status" value="1"/>
</dbReference>
<dbReference type="PIRSF" id="PIRSF000099">
    <property type="entry name" value="Histidinol_dh"/>
    <property type="match status" value="1"/>
</dbReference>
<dbReference type="PRINTS" id="PR00083">
    <property type="entry name" value="HOLDHDRGNASE"/>
</dbReference>
<dbReference type="SUPFAM" id="SSF53720">
    <property type="entry name" value="ALDH-like"/>
    <property type="match status" value="1"/>
</dbReference>
<dbReference type="PROSITE" id="PS00611">
    <property type="entry name" value="HISOL_DEHYDROGENASE"/>
    <property type="match status" value="1"/>
</dbReference>
<comment type="function">
    <text evidence="1">Catalyzes the sequential NAD-dependent oxidations of L-histidinol to L-histidinaldehyde and then to L-histidine.</text>
</comment>
<comment type="catalytic activity">
    <reaction evidence="1">
        <text>L-histidinol + 2 NAD(+) + H2O = L-histidine + 2 NADH + 3 H(+)</text>
        <dbReference type="Rhea" id="RHEA:20641"/>
        <dbReference type="ChEBI" id="CHEBI:15377"/>
        <dbReference type="ChEBI" id="CHEBI:15378"/>
        <dbReference type="ChEBI" id="CHEBI:57540"/>
        <dbReference type="ChEBI" id="CHEBI:57595"/>
        <dbReference type="ChEBI" id="CHEBI:57699"/>
        <dbReference type="ChEBI" id="CHEBI:57945"/>
        <dbReference type="EC" id="1.1.1.23"/>
    </reaction>
</comment>
<comment type="cofactor">
    <cofactor evidence="1">
        <name>Zn(2+)</name>
        <dbReference type="ChEBI" id="CHEBI:29105"/>
    </cofactor>
    <text evidence="1">Binds 1 zinc ion per subunit.</text>
</comment>
<comment type="pathway">
    <text evidence="1">Amino-acid biosynthesis; L-histidine biosynthesis; L-histidine from 5-phospho-alpha-D-ribose 1-diphosphate: step 9/9.</text>
</comment>
<comment type="similarity">
    <text evidence="1">Belongs to the histidinol dehydrogenase family.</text>
</comment>
<gene>
    <name evidence="1" type="primary">hisD</name>
    <name type="ordered locus">Mbar_A3507</name>
</gene>
<evidence type="ECO:0000255" key="1">
    <source>
        <dbReference type="HAMAP-Rule" id="MF_01024"/>
    </source>
</evidence>
<organism>
    <name type="scientific">Methanosarcina barkeri (strain Fusaro / DSM 804)</name>
    <dbReference type="NCBI Taxonomy" id="269797"/>
    <lineage>
        <taxon>Archaea</taxon>
        <taxon>Methanobacteriati</taxon>
        <taxon>Methanobacteriota</taxon>
        <taxon>Stenosarchaea group</taxon>
        <taxon>Methanomicrobia</taxon>
        <taxon>Methanosarcinales</taxon>
        <taxon>Methanosarcinaceae</taxon>
        <taxon>Methanosarcina</taxon>
    </lineage>
</organism>
<keyword id="KW-0028">Amino-acid biosynthesis</keyword>
<keyword id="KW-0368">Histidine biosynthesis</keyword>
<keyword id="KW-0479">Metal-binding</keyword>
<keyword id="KW-0520">NAD</keyword>
<keyword id="KW-0560">Oxidoreductase</keyword>
<keyword id="KW-0862">Zinc</keyword>
<name>HISX_METBF</name>
<feature type="chain" id="PRO_0000135896" description="Histidinol dehydrogenase">
    <location>
        <begin position="1"/>
        <end position="433"/>
    </location>
</feature>
<feature type="active site" description="Proton acceptor" evidence="1">
    <location>
        <position position="326"/>
    </location>
</feature>
<feature type="active site" description="Proton acceptor" evidence="1">
    <location>
        <position position="327"/>
    </location>
</feature>
<feature type="binding site" evidence="1">
    <location>
        <position position="129"/>
    </location>
    <ligand>
        <name>NAD(+)</name>
        <dbReference type="ChEBI" id="CHEBI:57540"/>
    </ligand>
</feature>
<feature type="binding site" evidence="1">
    <location>
        <position position="191"/>
    </location>
    <ligand>
        <name>NAD(+)</name>
        <dbReference type="ChEBI" id="CHEBI:57540"/>
    </ligand>
</feature>
<feature type="binding site" evidence="1">
    <location>
        <position position="214"/>
    </location>
    <ligand>
        <name>NAD(+)</name>
        <dbReference type="ChEBI" id="CHEBI:57540"/>
    </ligand>
</feature>
<feature type="binding site" evidence="1">
    <location>
        <position position="237"/>
    </location>
    <ligand>
        <name>substrate</name>
    </ligand>
</feature>
<feature type="binding site" evidence="1">
    <location>
        <position position="259"/>
    </location>
    <ligand>
        <name>substrate</name>
    </ligand>
</feature>
<feature type="binding site" evidence="1">
    <location>
        <position position="259"/>
    </location>
    <ligand>
        <name>Zn(2+)</name>
        <dbReference type="ChEBI" id="CHEBI:29105"/>
    </ligand>
</feature>
<feature type="binding site" evidence="1">
    <location>
        <position position="262"/>
    </location>
    <ligand>
        <name>substrate</name>
    </ligand>
</feature>
<feature type="binding site" evidence="1">
    <location>
        <position position="262"/>
    </location>
    <ligand>
        <name>Zn(2+)</name>
        <dbReference type="ChEBI" id="CHEBI:29105"/>
    </ligand>
</feature>
<feature type="binding site" evidence="1">
    <location>
        <position position="327"/>
    </location>
    <ligand>
        <name>substrate</name>
    </ligand>
</feature>
<feature type="binding site" evidence="1">
    <location>
        <position position="360"/>
    </location>
    <ligand>
        <name>substrate</name>
    </ligand>
</feature>
<feature type="binding site" evidence="1">
    <location>
        <position position="360"/>
    </location>
    <ligand>
        <name>Zn(2+)</name>
        <dbReference type="ChEBI" id="CHEBI:29105"/>
    </ligand>
</feature>
<feature type="binding site" evidence="1">
    <location>
        <position position="414"/>
    </location>
    <ligand>
        <name>substrate</name>
    </ligand>
</feature>
<feature type="binding site" evidence="1">
    <location>
        <position position="419"/>
    </location>
    <ligand>
        <name>substrate</name>
    </ligand>
</feature>
<feature type="binding site" evidence="1">
    <location>
        <position position="419"/>
    </location>
    <ligand>
        <name>Zn(2+)</name>
        <dbReference type="ChEBI" id="CHEBI:29105"/>
    </ligand>
</feature>